<evidence type="ECO:0000250" key="1"/>
<evidence type="ECO:0000255" key="2">
    <source>
        <dbReference type="HAMAP-Rule" id="MF_00403"/>
    </source>
</evidence>
<evidence type="ECO:0000256" key="3">
    <source>
        <dbReference type="SAM" id="MobiDB-lite"/>
    </source>
</evidence>
<evidence type="ECO:0000305" key="4"/>
<name>RS12_STRM5</name>
<feature type="chain" id="PRO_1000123522" description="Small ribosomal subunit protein uS12">
    <location>
        <begin position="1"/>
        <end position="124"/>
    </location>
</feature>
<feature type="region of interest" description="Disordered" evidence="3">
    <location>
        <begin position="1"/>
        <end position="25"/>
    </location>
</feature>
<feature type="modified residue" description="3-methylthioaspartic acid" evidence="1">
    <location>
        <position position="89"/>
    </location>
</feature>
<proteinExistence type="inferred from homology"/>
<dbReference type="EMBL" id="CP001111">
    <property type="protein sequence ID" value="ACF50456.1"/>
    <property type="molecule type" value="Genomic_DNA"/>
</dbReference>
<dbReference type="RefSeq" id="WP_004145320.1">
    <property type="nucleotide sequence ID" value="NC_011071.1"/>
</dbReference>
<dbReference type="SMR" id="B4SKV8"/>
<dbReference type="STRING" id="391008.Smal_0751"/>
<dbReference type="GeneID" id="97259929"/>
<dbReference type="KEGG" id="smt:Smal_0751"/>
<dbReference type="eggNOG" id="COG0048">
    <property type="taxonomic scope" value="Bacteria"/>
</dbReference>
<dbReference type="HOGENOM" id="CLU_104295_1_2_6"/>
<dbReference type="OrthoDB" id="9802366at2"/>
<dbReference type="Proteomes" id="UP000001867">
    <property type="component" value="Chromosome"/>
</dbReference>
<dbReference type="GO" id="GO:0015935">
    <property type="term" value="C:small ribosomal subunit"/>
    <property type="evidence" value="ECO:0007669"/>
    <property type="project" value="InterPro"/>
</dbReference>
<dbReference type="GO" id="GO:0019843">
    <property type="term" value="F:rRNA binding"/>
    <property type="evidence" value="ECO:0007669"/>
    <property type="project" value="UniProtKB-UniRule"/>
</dbReference>
<dbReference type="GO" id="GO:0003735">
    <property type="term" value="F:structural constituent of ribosome"/>
    <property type="evidence" value="ECO:0007669"/>
    <property type="project" value="InterPro"/>
</dbReference>
<dbReference type="GO" id="GO:0000049">
    <property type="term" value="F:tRNA binding"/>
    <property type="evidence" value="ECO:0007669"/>
    <property type="project" value="UniProtKB-UniRule"/>
</dbReference>
<dbReference type="GO" id="GO:0006412">
    <property type="term" value="P:translation"/>
    <property type="evidence" value="ECO:0007669"/>
    <property type="project" value="UniProtKB-UniRule"/>
</dbReference>
<dbReference type="CDD" id="cd03368">
    <property type="entry name" value="Ribosomal_S12"/>
    <property type="match status" value="1"/>
</dbReference>
<dbReference type="FunFam" id="2.40.50.140:FF:000001">
    <property type="entry name" value="30S ribosomal protein S12"/>
    <property type="match status" value="1"/>
</dbReference>
<dbReference type="Gene3D" id="2.40.50.140">
    <property type="entry name" value="Nucleic acid-binding proteins"/>
    <property type="match status" value="1"/>
</dbReference>
<dbReference type="HAMAP" id="MF_00403_B">
    <property type="entry name" value="Ribosomal_uS12_B"/>
    <property type="match status" value="1"/>
</dbReference>
<dbReference type="InterPro" id="IPR012340">
    <property type="entry name" value="NA-bd_OB-fold"/>
</dbReference>
<dbReference type="InterPro" id="IPR006032">
    <property type="entry name" value="Ribosomal_uS12"/>
</dbReference>
<dbReference type="InterPro" id="IPR005679">
    <property type="entry name" value="Ribosomal_uS12_bac"/>
</dbReference>
<dbReference type="NCBIfam" id="TIGR00981">
    <property type="entry name" value="rpsL_bact"/>
    <property type="match status" value="1"/>
</dbReference>
<dbReference type="PANTHER" id="PTHR11652">
    <property type="entry name" value="30S RIBOSOMAL PROTEIN S12 FAMILY MEMBER"/>
    <property type="match status" value="1"/>
</dbReference>
<dbReference type="Pfam" id="PF00164">
    <property type="entry name" value="Ribosom_S12_S23"/>
    <property type="match status" value="1"/>
</dbReference>
<dbReference type="PIRSF" id="PIRSF002133">
    <property type="entry name" value="Ribosomal_S12/S23"/>
    <property type="match status" value="1"/>
</dbReference>
<dbReference type="PRINTS" id="PR01034">
    <property type="entry name" value="RIBOSOMALS12"/>
</dbReference>
<dbReference type="SUPFAM" id="SSF50249">
    <property type="entry name" value="Nucleic acid-binding proteins"/>
    <property type="match status" value="1"/>
</dbReference>
<dbReference type="PROSITE" id="PS00055">
    <property type="entry name" value="RIBOSOMAL_S12"/>
    <property type="match status" value="1"/>
</dbReference>
<gene>
    <name evidence="2" type="primary">rpsL</name>
    <name type="ordered locus">Smal_0751</name>
</gene>
<accession>B4SKV8</accession>
<keyword id="KW-0488">Methylation</keyword>
<keyword id="KW-0687">Ribonucleoprotein</keyword>
<keyword id="KW-0689">Ribosomal protein</keyword>
<keyword id="KW-0694">RNA-binding</keyword>
<keyword id="KW-0699">rRNA-binding</keyword>
<keyword id="KW-0820">tRNA-binding</keyword>
<organism>
    <name type="scientific">Stenotrophomonas maltophilia (strain R551-3)</name>
    <dbReference type="NCBI Taxonomy" id="391008"/>
    <lineage>
        <taxon>Bacteria</taxon>
        <taxon>Pseudomonadati</taxon>
        <taxon>Pseudomonadota</taxon>
        <taxon>Gammaproteobacteria</taxon>
        <taxon>Lysobacterales</taxon>
        <taxon>Lysobacteraceae</taxon>
        <taxon>Stenotrophomonas</taxon>
        <taxon>Stenotrophomonas maltophilia group</taxon>
    </lineage>
</organism>
<sequence>MATINQLVRKPRQATTYKSASPALDKCPQRRGVCTRVYTTTPKKPNSALRKVAKVRLTNQEEVISYIGGEGHNLQEHSVVLIRGGRVKDLPGVRYHTVRGSLDAAGVAKRRQARSKYGAKRPKA</sequence>
<protein>
    <recommendedName>
        <fullName evidence="2">Small ribosomal subunit protein uS12</fullName>
    </recommendedName>
    <alternativeName>
        <fullName evidence="4">30S ribosomal protein S12</fullName>
    </alternativeName>
</protein>
<comment type="function">
    <text evidence="2">With S4 and S5 plays an important role in translational accuracy.</text>
</comment>
<comment type="function">
    <text evidence="2">Interacts with and stabilizes bases of the 16S rRNA that are involved in tRNA selection in the A site and with the mRNA backbone. Located at the interface of the 30S and 50S subunits, it traverses the body of the 30S subunit contacting proteins on the other side and probably holding the rRNA structure together. The combined cluster of proteins S8, S12 and S17 appears to hold together the shoulder and platform of the 30S subunit.</text>
</comment>
<comment type="subunit">
    <text evidence="2">Part of the 30S ribosomal subunit. Contacts proteins S8 and S17. May interact with IF1 in the 30S initiation complex.</text>
</comment>
<comment type="similarity">
    <text evidence="2">Belongs to the universal ribosomal protein uS12 family.</text>
</comment>
<reference key="1">
    <citation type="submission" date="2008-06" db="EMBL/GenBank/DDBJ databases">
        <title>Complete sequence of Stenotrophomonas maltophilia R551-3.</title>
        <authorList>
            <consortium name="US DOE Joint Genome Institute"/>
            <person name="Lucas S."/>
            <person name="Copeland A."/>
            <person name="Lapidus A."/>
            <person name="Glavina del Rio T."/>
            <person name="Dalin E."/>
            <person name="Tice H."/>
            <person name="Pitluck S."/>
            <person name="Chain P."/>
            <person name="Malfatti S."/>
            <person name="Shin M."/>
            <person name="Vergez L."/>
            <person name="Lang D."/>
            <person name="Schmutz J."/>
            <person name="Larimer F."/>
            <person name="Land M."/>
            <person name="Hauser L."/>
            <person name="Kyrpides N."/>
            <person name="Mikhailova N."/>
            <person name="Taghavi S."/>
            <person name="Monchy S."/>
            <person name="Newman L."/>
            <person name="Vangronsveld J."/>
            <person name="van der Lelie D."/>
            <person name="Richardson P."/>
        </authorList>
    </citation>
    <scope>NUCLEOTIDE SEQUENCE [LARGE SCALE GENOMIC DNA]</scope>
    <source>
        <strain>R551-3</strain>
    </source>
</reference>